<feature type="chain" id="PRO_0000375068" description="Ribosomal protein uS12 methylthiotransferase RimO">
    <location>
        <begin position="1"/>
        <end position="449"/>
    </location>
</feature>
<feature type="domain" description="MTTase N-terminal" evidence="1">
    <location>
        <begin position="15"/>
        <end position="125"/>
    </location>
</feature>
<feature type="domain" description="Radical SAM core" evidence="2">
    <location>
        <begin position="142"/>
        <end position="379"/>
    </location>
</feature>
<feature type="domain" description="TRAM" evidence="1">
    <location>
        <begin position="382"/>
        <end position="448"/>
    </location>
</feature>
<feature type="binding site" evidence="1">
    <location>
        <position position="24"/>
    </location>
    <ligand>
        <name>[4Fe-4S] cluster</name>
        <dbReference type="ChEBI" id="CHEBI:49883"/>
        <label>1</label>
    </ligand>
</feature>
<feature type="binding site" evidence="1">
    <location>
        <position position="60"/>
    </location>
    <ligand>
        <name>[4Fe-4S] cluster</name>
        <dbReference type="ChEBI" id="CHEBI:49883"/>
        <label>1</label>
    </ligand>
</feature>
<feature type="binding site" evidence="1">
    <location>
        <position position="89"/>
    </location>
    <ligand>
        <name>[4Fe-4S] cluster</name>
        <dbReference type="ChEBI" id="CHEBI:49883"/>
        <label>1</label>
    </ligand>
</feature>
<feature type="binding site" evidence="1">
    <location>
        <position position="156"/>
    </location>
    <ligand>
        <name>[4Fe-4S] cluster</name>
        <dbReference type="ChEBI" id="CHEBI:49883"/>
        <label>2</label>
        <note>4Fe-4S-S-AdoMet</note>
    </ligand>
</feature>
<feature type="binding site" evidence="1">
    <location>
        <position position="160"/>
    </location>
    <ligand>
        <name>[4Fe-4S] cluster</name>
        <dbReference type="ChEBI" id="CHEBI:49883"/>
        <label>2</label>
        <note>4Fe-4S-S-AdoMet</note>
    </ligand>
</feature>
<feature type="binding site" evidence="1">
    <location>
        <position position="163"/>
    </location>
    <ligand>
        <name>[4Fe-4S] cluster</name>
        <dbReference type="ChEBI" id="CHEBI:49883"/>
        <label>2</label>
        <note>4Fe-4S-S-AdoMet</note>
    </ligand>
</feature>
<reference key="1">
    <citation type="submission" date="2007-07" db="EMBL/GenBank/DDBJ databases">
        <title>Complete sequence of chromosome of Xanthobacter autotrophicus Py2.</title>
        <authorList>
            <consortium name="US DOE Joint Genome Institute"/>
            <person name="Copeland A."/>
            <person name="Lucas S."/>
            <person name="Lapidus A."/>
            <person name="Barry K."/>
            <person name="Glavina del Rio T."/>
            <person name="Hammon N."/>
            <person name="Israni S."/>
            <person name="Dalin E."/>
            <person name="Tice H."/>
            <person name="Pitluck S."/>
            <person name="Sims D."/>
            <person name="Brettin T."/>
            <person name="Bruce D."/>
            <person name="Detter J.C."/>
            <person name="Han C."/>
            <person name="Tapia R."/>
            <person name="Brainard J."/>
            <person name="Schmutz J."/>
            <person name="Larimer F."/>
            <person name="Land M."/>
            <person name="Hauser L."/>
            <person name="Kyrpides N."/>
            <person name="Kim E."/>
            <person name="Ensigns S.A."/>
            <person name="Richardson P."/>
        </authorList>
    </citation>
    <scope>NUCLEOTIDE SEQUENCE [LARGE SCALE GENOMIC DNA]</scope>
    <source>
        <strain>ATCC BAA-1158 / Py2</strain>
    </source>
</reference>
<comment type="function">
    <text evidence="1">Catalyzes the methylthiolation of an aspartic acid residue of ribosomal protein uS12.</text>
</comment>
<comment type="catalytic activity">
    <reaction evidence="1">
        <text>L-aspartate(89)-[ribosomal protein uS12]-hydrogen + (sulfur carrier)-SH + AH2 + 2 S-adenosyl-L-methionine = 3-methylsulfanyl-L-aspartate(89)-[ribosomal protein uS12]-hydrogen + (sulfur carrier)-H + 5'-deoxyadenosine + L-methionine + A + S-adenosyl-L-homocysteine + 2 H(+)</text>
        <dbReference type="Rhea" id="RHEA:37087"/>
        <dbReference type="Rhea" id="RHEA-COMP:10460"/>
        <dbReference type="Rhea" id="RHEA-COMP:10461"/>
        <dbReference type="Rhea" id="RHEA-COMP:14737"/>
        <dbReference type="Rhea" id="RHEA-COMP:14739"/>
        <dbReference type="ChEBI" id="CHEBI:13193"/>
        <dbReference type="ChEBI" id="CHEBI:15378"/>
        <dbReference type="ChEBI" id="CHEBI:17319"/>
        <dbReference type="ChEBI" id="CHEBI:17499"/>
        <dbReference type="ChEBI" id="CHEBI:29917"/>
        <dbReference type="ChEBI" id="CHEBI:29961"/>
        <dbReference type="ChEBI" id="CHEBI:57844"/>
        <dbReference type="ChEBI" id="CHEBI:57856"/>
        <dbReference type="ChEBI" id="CHEBI:59789"/>
        <dbReference type="ChEBI" id="CHEBI:64428"/>
        <dbReference type="ChEBI" id="CHEBI:73599"/>
        <dbReference type="EC" id="2.8.4.4"/>
    </reaction>
</comment>
<comment type="cofactor">
    <cofactor evidence="1">
        <name>[4Fe-4S] cluster</name>
        <dbReference type="ChEBI" id="CHEBI:49883"/>
    </cofactor>
    <text evidence="1">Binds 2 [4Fe-4S] clusters. One cluster is coordinated with 3 cysteines and an exchangeable S-adenosyl-L-methionine.</text>
</comment>
<comment type="subcellular location">
    <subcellularLocation>
        <location evidence="1">Cytoplasm</location>
    </subcellularLocation>
</comment>
<comment type="similarity">
    <text evidence="1">Belongs to the methylthiotransferase family. RimO subfamily.</text>
</comment>
<organism>
    <name type="scientific">Xanthobacter autotrophicus (strain ATCC BAA-1158 / Py2)</name>
    <dbReference type="NCBI Taxonomy" id="78245"/>
    <lineage>
        <taxon>Bacteria</taxon>
        <taxon>Pseudomonadati</taxon>
        <taxon>Pseudomonadota</taxon>
        <taxon>Alphaproteobacteria</taxon>
        <taxon>Hyphomicrobiales</taxon>
        <taxon>Xanthobacteraceae</taxon>
        <taxon>Xanthobacter</taxon>
    </lineage>
</organism>
<name>RIMO_XANP2</name>
<protein>
    <recommendedName>
        <fullName evidence="1">Ribosomal protein uS12 methylthiotransferase RimO</fullName>
        <shortName evidence="1">uS12 MTTase</shortName>
        <shortName evidence="1">uS12 methylthiotransferase</shortName>
        <ecNumber evidence="1">2.8.4.4</ecNumber>
    </recommendedName>
    <alternativeName>
        <fullName evidence="1">Ribosomal protein uS12 (aspartate-C(3))-methylthiotransferase</fullName>
    </alternativeName>
    <alternativeName>
        <fullName evidence="1">Ribosome maturation factor RimO</fullName>
    </alternativeName>
</protein>
<sequence length="449" mass="48699">MADTVLNSAPSKAAPRISFVSLGCPKALVDSERIVTRLRAEGYELTKTHQGADLVVVNTCGFLDSAKAESLNAIGEALAENGKVVVTGCMGAEPEQIREVHPSVLAITGPQQYESVLAAVHEAVPPAHDPFLDLVPAEGVKLTPRHYAYLKISEGCSNRCTFCIIPKLRGDLVSRPAGDVLREAERLVKAGVKELLVISQDTSAYGVDLRYATSPWGDKEVAARFLDLAGALGDLGAWVRLHYVYPYPHVDAVMELMAAGKVLPYLDIPFQHASPTVLKRMKRPASQEKTLARIQAWRAAVPDLTLRSTFIVGFPGETEAEFEELLGFLEEAEIDRAGCFKFEPVRGADANALENPVPDAVKAERYDRFMRTQQKVSARRLKRKVGTRQSVIIDTVTPDGGIGRTKGDAPEIDGTVKVFARRPLRVGEIATVKIEAAGPYDLSGTAVGF</sequence>
<dbReference type="EC" id="2.8.4.4" evidence="1"/>
<dbReference type="EMBL" id="CP000781">
    <property type="protein sequence ID" value="ABS69696.1"/>
    <property type="molecule type" value="Genomic_DNA"/>
</dbReference>
<dbReference type="SMR" id="A7INV0"/>
<dbReference type="STRING" id="78245.Xaut_4475"/>
<dbReference type="KEGG" id="xau:Xaut_4475"/>
<dbReference type="eggNOG" id="COG0621">
    <property type="taxonomic scope" value="Bacteria"/>
</dbReference>
<dbReference type="HOGENOM" id="CLU_018697_0_0_5"/>
<dbReference type="OrthoDB" id="9805215at2"/>
<dbReference type="PhylomeDB" id="A7INV0"/>
<dbReference type="Proteomes" id="UP000002417">
    <property type="component" value="Chromosome"/>
</dbReference>
<dbReference type="GO" id="GO:0005829">
    <property type="term" value="C:cytosol"/>
    <property type="evidence" value="ECO:0007669"/>
    <property type="project" value="TreeGrafter"/>
</dbReference>
<dbReference type="GO" id="GO:0051539">
    <property type="term" value="F:4 iron, 4 sulfur cluster binding"/>
    <property type="evidence" value="ECO:0007669"/>
    <property type="project" value="UniProtKB-UniRule"/>
</dbReference>
<dbReference type="GO" id="GO:0035599">
    <property type="term" value="F:aspartic acid methylthiotransferase activity"/>
    <property type="evidence" value="ECO:0007669"/>
    <property type="project" value="TreeGrafter"/>
</dbReference>
<dbReference type="GO" id="GO:0046872">
    <property type="term" value="F:metal ion binding"/>
    <property type="evidence" value="ECO:0007669"/>
    <property type="project" value="UniProtKB-KW"/>
</dbReference>
<dbReference type="GO" id="GO:0103039">
    <property type="term" value="F:protein methylthiotransferase activity"/>
    <property type="evidence" value="ECO:0007669"/>
    <property type="project" value="UniProtKB-EC"/>
</dbReference>
<dbReference type="GO" id="GO:0006400">
    <property type="term" value="P:tRNA modification"/>
    <property type="evidence" value="ECO:0007669"/>
    <property type="project" value="InterPro"/>
</dbReference>
<dbReference type="CDD" id="cd01335">
    <property type="entry name" value="Radical_SAM"/>
    <property type="match status" value="1"/>
</dbReference>
<dbReference type="FunFam" id="3.40.50.12160:FF:000002">
    <property type="entry name" value="Ribosomal protein S12 methylthiotransferase RimO"/>
    <property type="match status" value="1"/>
</dbReference>
<dbReference type="FunFam" id="3.80.30.20:FF:000001">
    <property type="entry name" value="tRNA-2-methylthio-N(6)-dimethylallyladenosine synthase 2"/>
    <property type="match status" value="1"/>
</dbReference>
<dbReference type="Gene3D" id="3.40.50.12160">
    <property type="entry name" value="Methylthiotransferase, N-terminal domain"/>
    <property type="match status" value="1"/>
</dbReference>
<dbReference type="Gene3D" id="2.40.50.140">
    <property type="entry name" value="Nucleic acid-binding proteins"/>
    <property type="match status" value="1"/>
</dbReference>
<dbReference type="Gene3D" id="3.80.30.20">
    <property type="entry name" value="tm_1862 like domain"/>
    <property type="match status" value="1"/>
</dbReference>
<dbReference type="HAMAP" id="MF_01865">
    <property type="entry name" value="MTTase_RimO"/>
    <property type="match status" value="1"/>
</dbReference>
<dbReference type="InterPro" id="IPR006638">
    <property type="entry name" value="Elp3/MiaA/NifB-like_rSAM"/>
</dbReference>
<dbReference type="InterPro" id="IPR005839">
    <property type="entry name" value="Methylthiotransferase"/>
</dbReference>
<dbReference type="InterPro" id="IPR020612">
    <property type="entry name" value="Methylthiotransferase_CS"/>
</dbReference>
<dbReference type="InterPro" id="IPR013848">
    <property type="entry name" value="Methylthiotransferase_N"/>
</dbReference>
<dbReference type="InterPro" id="IPR038135">
    <property type="entry name" value="Methylthiotransferase_N_sf"/>
</dbReference>
<dbReference type="InterPro" id="IPR012340">
    <property type="entry name" value="NA-bd_OB-fold"/>
</dbReference>
<dbReference type="InterPro" id="IPR005840">
    <property type="entry name" value="Ribosomal_uS12_MeSTrfase_RimO"/>
</dbReference>
<dbReference type="InterPro" id="IPR007197">
    <property type="entry name" value="rSAM"/>
</dbReference>
<dbReference type="InterPro" id="IPR023404">
    <property type="entry name" value="rSAM_horseshoe"/>
</dbReference>
<dbReference type="InterPro" id="IPR002792">
    <property type="entry name" value="TRAM_dom"/>
</dbReference>
<dbReference type="NCBIfam" id="TIGR01125">
    <property type="entry name" value="30S ribosomal protein S12 methylthiotransferase RimO"/>
    <property type="match status" value="1"/>
</dbReference>
<dbReference type="NCBIfam" id="TIGR00089">
    <property type="entry name" value="MiaB/RimO family radical SAM methylthiotransferase"/>
    <property type="match status" value="1"/>
</dbReference>
<dbReference type="PANTHER" id="PTHR43837">
    <property type="entry name" value="RIBOSOMAL PROTEIN S12 METHYLTHIOTRANSFERASE RIMO"/>
    <property type="match status" value="1"/>
</dbReference>
<dbReference type="PANTHER" id="PTHR43837:SF1">
    <property type="entry name" value="RIBOSOMAL PROTEIN US12 METHYLTHIOTRANSFERASE RIMO"/>
    <property type="match status" value="1"/>
</dbReference>
<dbReference type="Pfam" id="PF04055">
    <property type="entry name" value="Radical_SAM"/>
    <property type="match status" value="1"/>
</dbReference>
<dbReference type="Pfam" id="PF18693">
    <property type="entry name" value="TRAM_2"/>
    <property type="match status" value="1"/>
</dbReference>
<dbReference type="Pfam" id="PF00919">
    <property type="entry name" value="UPF0004"/>
    <property type="match status" value="1"/>
</dbReference>
<dbReference type="SFLD" id="SFLDG01082">
    <property type="entry name" value="B12-binding_domain_containing"/>
    <property type="match status" value="1"/>
</dbReference>
<dbReference type="SFLD" id="SFLDG01061">
    <property type="entry name" value="methylthiotransferase"/>
    <property type="match status" value="1"/>
</dbReference>
<dbReference type="SFLD" id="SFLDF00274">
    <property type="entry name" value="ribosomal_protein_S12_methylth"/>
    <property type="match status" value="1"/>
</dbReference>
<dbReference type="SMART" id="SM00729">
    <property type="entry name" value="Elp3"/>
    <property type="match status" value="1"/>
</dbReference>
<dbReference type="SUPFAM" id="SSF102114">
    <property type="entry name" value="Radical SAM enzymes"/>
    <property type="match status" value="1"/>
</dbReference>
<dbReference type="PROSITE" id="PS51449">
    <property type="entry name" value="MTTASE_N"/>
    <property type="match status" value="1"/>
</dbReference>
<dbReference type="PROSITE" id="PS01278">
    <property type="entry name" value="MTTASE_RADICAL"/>
    <property type="match status" value="1"/>
</dbReference>
<dbReference type="PROSITE" id="PS51918">
    <property type="entry name" value="RADICAL_SAM"/>
    <property type="match status" value="1"/>
</dbReference>
<dbReference type="PROSITE" id="PS50926">
    <property type="entry name" value="TRAM"/>
    <property type="match status" value="1"/>
</dbReference>
<evidence type="ECO:0000255" key="1">
    <source>
        <dbReference type="HAMAP-Rule" id="MF_01865"/>
    </source>
</evidence>
<evidence type="ECO:0000255" key="2">
    <source>
        <dbReference type="PROSITE-ProRule" id="PRU01266"/>
    </source>
</evidence>
<accession>A7INV0</accession>
<keyword id="KW-0004">4Fe-4S</keyword>
<keyword id="KW-0963">Cytoplasm</keyword>
<keyword id="KW-0408">Iron</keyword>
<keyword id="KW-0411">Iron-sulfur</keyword>
<keyword id="KW-0479">Metal-binding</keyword>
<keyword id="KW-1185">Reference proteome</keyword>
<keyword id="KW-0949">S-adenosyl-L-methionine</keyword>
<keyword id="KW-0808">Transferase</keyword>
<gene>
    <name evidence="1" type="primary">rimO</name>
    <name type="ordered locus">Xaut_4475</name>
</gene>
<proteinExistence type="inferred from homology"/>